<evidence type="ECO:0000250" key="1"/>
<evidence type="ECO:0000250" key="2">
    <source>
        <dbReference type="UniProtKB" id="P52298"/>
    </source>
</evidence>
<evidence type="ECO:0000255" key="3">
    <source>
        <dbReference type="PROSITE-ProRule" id="PRU00176"/>
    </source>
</evidence>
<evidence type="ECO:0000305" key="4"/>
<accession>Q6DES0</accession>
<proteinExistence type="evidence at transcript level"/>
<organism>
    <name type="scientific">Xenopus tropicalis</name>
    <name type="common">Western clawed frog</name>
    <name type="synonym">Silurana tropicalis</name>
    <dbReference type="NCBI Taxonomy" id="8364"/>
    <lineage>
        <taxon>Eukaryota</taxon>
        <taxon>Metazoa</taxon>
        <taxon>Chordata</taxon>
        <taxon>Craniata</taxon>
        <taxon>Vertebrata</taxon>
        <taxon>Euteleostomi</taxon>
        <taxon>Amphibia</taxon>
        <taxon>Batrachia</taxon>
        <taxon>Anura</taxon>
        <taxon>Pipoidea</taxon>
        <taxon>Pipidae</taxon>
        <taxon>Xenopodinae</taxon>
        <taxon>Xenopus</taxon>
        <taxon>Silurana</taxon>
    </lineage>
</organism>
<gene>
    <name type="primary">ncbp2</name>
    <name type="synonym">cbp20</name>
    <name type="ORF">TEgg139n10.1</name>
</gene>
<protein>
    <recommendedName>
        <fullName>Nuclear cap-binding protein subunit 2</fullName>
    </recommendedName>
    <alternativeName>
        <fullName>20 kDa nuclear cap-binding protein</fullName>
    </alternativeName>
    <alternativeName>
        <fullName>NCBP 20 kDa subunit</fullName>
        <shortName>CBP20</shortName>
    </alternativeName>
</protein>
<dbReference type="EMBL" id="CR761328">
    <property type="protein sequence ID" value="CAJ81729.1"/>
    <property type="molecule type" value="mRNA"/>
</dbReference>
<dbReference type="EMBL" id="BC077024">
    <property type="protein sequence ID" value="AAH77024.1"/>
    <property type="molecule type" value="mRNA"/>
</dbReference>
<dbReference type="RefSeq" id="NP_001006879.1">
    <property type="nucleotide sequence ID" value="NM_001006878.1"/>
</dbReference>
<dbReference type="SMR" id="Q6DES0"/>
<dbReference type="FunCoup" id="Q6DES0">
    <property type="interactions" value="3009"/>
</dbReference>
<dbReference type="STRING" id="8364.ENSXETP00000038663"/>
<dbReference type="PaxDb" id="8364-ENSXETP00000041997"/>
<dbReference type="DNASU" id="448671"/>
<dbReference type="GeneID" id="448671"/>
<dbReference type="KEGG" id="xtr:448671"/>
<dbReference type="AGR" id="Xenbase:XB-GENE-1005786"/>
<dbReference type="CTD" id="22916"/>
<dbReference type="Xenbase" id="XB-GENE-1005786">
    <property type="gene designation" value="ncbp2"/>
</dbReference>
<dbReference type="eggNOG" id="KOG0121">
    <property type="taxonomic scope" value="Eukaryota"/>
</dbReference>
<dbReference type="HOGENOM" id="CLU_070952_2_0_1"/>
<dbReference type="InParanoid" id="Q6DES0"/>
<dbReference type="OMA" id="TKCASPE"/>
<dbReference type="OrthoDB" id="201398at2759"/>
<dbReference type="PhylomeDB" id="Q6DES0"/>
<dbReference type="Reactome" id="R-XTR-111367">
    <property type="pathway name" value="SLBP independent Processing of Histone Pre-mRNAs"/>
</dbReference>
<dbReference type="Reactome" id="R-XTR-112382">
    <property type="pathway name" value="Formation of RNA Pol II elongation complex"/>
</dbReference>
<dbReference type="Reactome" id="R-XTR-113418">
    <property type="pathway name" value="Formation of the Early Elongation Complex"/>
</dbReference>
<dbReference type="Reactome" id="R-XTR-674695">
    <property type="pathway name" value="RNA Polymerase II Pre-transcription Events"/>
</dbReference>
<dbReference type="Reactome" id="R-XTR-6803529">
    <property type="pathway name" value="FGFR2 alternative splicing"/>
</dbReference>
<dbReference type="Reactome" id="R-XTR-6807505">
    <property type="pathway name" value="RNA polymerase II transcribes snRNA genes"/>
</dbReference>
<dbReference type="Reactome" id="R-XTR-72086">
    <property type="pathway name" value="mRNA Capping"/>
</dbReference>
<dbReference type="Reactome" id="R-XTR-72163">
    <property type="pathway name" value="mRNA Splicing - Major Pathway"/>
</dbReference>
<dbReference type="Reactome" id="R-XTR-72165">
    <property type="pathway name" value="mRNA Splicing - Minor Pathway"/>
</dbReference>
<dbReference type="Reactome" id="R-XTR-72203">
    <property type="pathway name" value="Processing of Capped Intron-Containing Pre-mRNA"/>
</dbReference>
<dbReference type="Reactome" id="R-XTR-73856">
    <property type="pathway name" value="RNA Polymerase II Transcription Termination"/>
</dbReference>
<dbReference type="Reactome" id="R-XTR-77588">
    <property type="pathway name" value="SLBP Dependent Processing of Replication-Dependent Histone Pre-mRNAs"/>
</dbReference>
<dbReference type="Reactome" id="R-XTR-975956">
    <property type="pathway name" value="Nonsense Mediated Decay (NMD) independent of the Exon Junction Complex (EJC)"/>
</dbReference>
<dbReference type="Reactome" id="R-XTR-975957">
    <property type="pathway name" value="Nonsense Mediated Decay (NMD) enhanced by the Exon Junction Complex (EJC)"/>
</dbReference>
<dbReference type="Proteomes" id="UP000008143">
    <property type="component" value="Chromosome 5"/>
</dbReference>
<dbReference type="Bgee" id="ENSXETG00000019384">
    <property type="expression patterns" value="Expressed in ovary and 12 other cell types or tissues"/>
</dbReference>
<dbReference type="ExpressionAtlas" id="Q6DES0">
    <property type="expression patterns" value="differential"/>
</dbReference>
<dbReference type="GO" id="GO:0005737">
    <property type="term" value="C:cytoplasm"/>
    <property type="evidence" value="ECO:0007669"/>
    <property type="project" value="UniProtKB-SubCell"/>
</dbReference>
<dbReference type="GO" id="GO:0005846">
    <property type="term" value="C:nuclear cap binding complex"/>
    <property type="evidence" value="ECO:0007669"/>
    <property type="project" value="InterPro"/>
</dbReference>
<dbReference type="GO" id="GO:0005634">
    <property type="term" value="C:nucleus"/>
    <property type="evidence" value="ECO:0007669"/>
    <property type="project" value="UniProtKB-SubCell"/>
</dbReference>
<dbReference type="GO" id="GO:0003729">
    <property type="term" value="F:mRNA binding"/>
    <property type="evidence" value="ECO:0000250"/>
    <property type="project" value="UniProtKB"/>
</dbReference>
<dbReference type="GO" id="GO:0000340">
    <property type="term" value="F:RNA 7-methylguanosine cap binding"/>
    <property type="evidence" value="ECO:0000250"/>
    <property type="project" value="UniProtKB"/>
</dbReference>
<dbReference type="GO" id="GO:0017069">
    <property type="term" value="F:snRNA binding"/>
    <property type="evidence" value="ECO:0000250"/>
    <property type="project" value="UniProtKB"/>
</dbReference>
<dbReference type="GO" id="GO:0045292">
    <property type="term" value="P:mRNA cis splicing, via spliceosome"/>
    <property type="evidence" value="ECO:0000250"/>
    <property type="project" value="UniProtKB"/>
</dbReference>
<dbReference type="GO" id="GO:0051028">
    <property type="term" value="P:mRNA transport"/>
    <property type="evidence" value="ECO:0007669"/>
    <property type="project" value="UniProtKB-KW"/>
</dbReference>
<dbReference type="GO" id="GO:0000184">
    <property type="term" value="P:nuclear-transcribed mRNA catabolic process, nonsense-mediated decay"/>
    <property type="evidence" value="ECO:0007669"/>
    <property type="project" value="UniProtKB-KW"/>
</dbReference>
<dbReference type="GO" id="GO:0046833">
    <property type="term" value="P:positive regulation of RNA export from nucleus"/>
    <property type="evidence" value="ECO:0000250"/>
    <property type="project" value="UniProtKB"/>
</dbReference>
<dbReference type="GO" id="GO:0006417">
    <property type="term" value="P:regulation of translation"/>
    <property type="evidence" value="ECO:0007669"/>
    <property type="project" value="UniProtKB-KW"/>
</dbReference>
<dbReference type="GO" id="GO:0031047">
    <property type="term" value="P:regulatory ncRNA-mediated gene silencing"/>
    <property type="evidence" value="ECO:0007669"/>
    <property type="project" value="UniProtKB-KW"/>
</dbReference>
<dbReference type="GO" id="GO:0008380">
    <property type="term" value="P:RNA splicing"/>
    <property type="evidence" value="ECO:0000250"/>
    <property type="project" value="UniProtKB"/>
</dbReference>
<dbReference type="GO" id="GO:0006408">
    <property type="term" value="P:snRNA export from nucleus"/>
    <property type="evidence" value="ECO:0000250"/>
    <property type="project" value="UniProtKB"/>
</dbReference>
<dbReference type="CDD" id="cd12240">
    <property type="entry name" value="RRM_NCBP2"/>
    <property type="match status" value="1"/>
</dbReference>
<dbReference type="FunFam" id="3.30.70.330:FF:000128">
    <property type="entry name" value="Nuclear cap-binding protein subunit 2"/>
    <property type="match status" value="1"/>
</dbReference>
<dbReference type="Gene3D" id="3.30.70.330">
    <property type="match status" value="1"/>
</dbReference>
<dbReference type="InterPro" id="IPR027157">
    <property type="entry name" value="NCBP2"/>
</dbReference>
<dbReference type="InterPro" id="IPR034148">
    <property type="entry name" value="NCBP2_RRM"/>
</dbReference>
<dbReference type="InterPro" id="IPR012677">
    <property type="entry name" value="Nucleotide-bd_a/b_plait_sf"/>
</dbReference>
<dbReference type="InterPro" id="IPR035979">
    <property type="entry name" value="RBD_domain_sf"/>
</dbReference>
<dbReference type="InterPro" id="IPR000504">
    <property type="entry name" value="RRM_dom"/>
</dbReference>
<dbReference type="PANTHER" id="PTHR18847">
    <property type="entry name" value="20 KD NUCLEAR CAP BINDING PROTEIN"/>
    <property type="match status" value="1"/>
</dbReference>
<dbReference type="PANTHER" id="PTHR18847:SF0">
    <property type="entry name" value="NUCLEAR CAP-BINDING PROTEIN SUBUNIT 2"/>
    <property type="match status" value="1"/>
</dbReference>
<dbReference type="Pfam" id="PF00076">
    <property type="entry name" value="RRM_1"/>
    <property type="match status" value="1"/>
</dbReference>
<dbReference type="SMART" id="SM00360">
    <property type="entry name" value="RRM"/>
    <property type="match status" value="1"/>
</dbReference>
<dbReference type="SUPFAM" id="SSF54928">
    <property type="entry name" value="RNA-binding domain, RBD"/>
    <property type="match status" value="1"/>
</dbReference>
<dbReference type="PROSITE" id="PS50102">
    <property type="entry name" value="RRM"/>
    <property type="match status" value="1"/>
</dbReference>
<feature type="chain" id="PRO_0000385255" description="Nuclear cap-binding protein subunit 2">
    <location>
        <begin position="1"/>
        <end position="153"/>
    </location>
</feature>
<feature type="domain" description="RRM" evidence="3">
    <location>
        <begin position="37"/>
        <end position="115"/>
    </location>
</feature>
<feature type="binding site" evidence="1">
    <location>
        <position position="17"/>
    </location>
    <ligand>
        <name>mRNA</name>
        <dbReference type="ChEBI" id="CHEBI:33699"/>
    </ligand>
    <ligandPart>
        <name>mRNA cap</name>
    </ligandPart>
</feature>
<feature type="binding site" evidence="1">
    <location>
        <position position="40"/>
    </location>
    <ligand>
        <name>mRNA</name>
        <dbReference type="ChEBI" id="CHEBI:33699"/>
    </ligand>
    <ligandPart>
        <name>mRNA cap</name>
    </ligandPart>
</feature>
<feature type="binding site" evidence="1">
    <location>
        <begin position="109"/>
        <end position="113"/>
    </location>
    <ligand>
        <name>mRNA</name>
        <dbReference type="ChEBI" id="CHEBI:33699"/>
    </ligand>
    <ligandPart>
        <name>mRNA cap</name>
    </ligandPart>
</feature>
<feature type="binding site" evidence="1">
    <location>
        <begin position="120"/>
        <end position="124"/>
    </location>
    <ligand>
        <name>mRNA</name>
        <dbReference type="ChEBI" id="CHEBI:33699"/>
    </ligand>
    <ligandPart>
        <name>mRNA cap</name>
    </ligandPart>
</feature>
<feature type="binding site" evidence="1">
    <location>
        <begin position="130"/>
        <end position="131"/>
    </location>
    <ligand>
        <name>mRNA</name>
        <dbReference type="ChEBI" id="CHEBI:33699"/>
    </ligand>
    <ligandPart>
        <name>mRNA cap</name>
    </ligandPart>
</feature>
<comment type="function">
    <text evidence="2">Component of the cap-binding complex (CBC), which binds co-transcriptionally to the 5' cap of pre-mRNAs and is involved in various processes such as pre-mRNA splicing, translation regulation, nonsense-mediated mRNA decay, RNA-mediated gene silencing (RNAi) by microRNAs (miRNAs) and mRNA export. The CBC complex is involved in mRNA export from the nucleus, leading to the recruitment of the mRNA export machinery to the 5' end of mRNA and to mRNA export in a 5' to 3' direction through the nuclear pore. The CBC complex is also involved in mediating U snRNA and intronless mRNAs export from the nucleus. The CBC complex is essential for a pioneer round of mRNA translation, before steady state translation when the CBC complex is replaced by cytoplasmic cap-binding protein eIF4E. The pioneer round of mRNA translation mediated by the CBC complex plays a central role in nonsense-mediated mRNA decay (NMD), NMD only taking place in mRNAs bound to the CBC complex, but not on eIF4E-bound mRNAs. The CBC complex enhances NMD in mRNAs containing at least one exon-junction complex (EJC), promoting the interaction between upf1 and upf2. The CBC complex is also involved in 'failsafe' NMD, which is independent of the EJC complex, while it does not participate in Staufen-mediated mRNA decay (SMD). During cell proliferation, the CBC complex is also involved in microRNAs (miRNAs) biogenesis via its interaction with srrt/ars2, thereby being required for miRNA-mediated RNA interference. The CBC complex also acts as a negative regulator of parn, thereby acting as an inhibitor of mRNA deadenylation. In the CBC complex, ncbp2/cbp20 recognizes and binds capped RNAs (m7GpppG-capped RNA) but requires ncbp1/cbp80 to stabilize the movement of its N-terminal loop and lock the CBC into a high affinity cap-binding state with the cap structure. The conventional cap-binding complex with NCBP2 binds both small nuclear RNA (snRNA) and messenger (mRNA) and is involved in their export from the nucleus (By similarity).</text>
</comment>
<comment type="subunit">
    <text evidence="2">Component of the nuclear cap-binding complex (CBC), a heterodimer composed of ncbp1/cbp80 and ncbp2/cbp20 that interacts with m7GpppG-capped RNA.</text>
</comment>
<comment type="subcellular location">
    <subcellularLocation>
        <location evidence="2">Nucleus</location>
    </subcellularLocation>
    <subcellularLocation>
        <location evidence="2">Cytoplasm</location>
    </subcellularLocation>
</comment>
<comment type="similarity">
    <text evidence="4">Belongs to the RRM NCBP2 family.</text>
</comment>
<sequence length="153" mass="17556">MALGALKSDSYVELSQYRDQHFRGNRSDQECLLKHSCTLYVGNLSFYTTEEQIHELFSKSGDVKKIVMGLDKIKKTACGFCFVEYYTRTDAEQAMRFINGTRLDDRIIRTDWDAGFKEGRQYGRGKSGGQVRDEYRQDYDAGRGGYGKIVQSI</sequence>
<reference key="1">
    <citation type="submission" date="2006-10" db="EMBL/GenBank/DDBJ databases">
        <authorList>
            <consortium name="Sanger Xenopus tropicalis EST/cDNA project"/>
        </authorList>
    </citation>
    <scope>NUCLEOTIDE SEQUENCE [LARGE SCALE MRNA]</scope>
    <source>
        <tissue>Egg</tissue>
    </source>
</reference>
<reference key="2">
    <citation type="submission" date="2004-07" db="EMBL/GenBank/DDBJ databases">
        <authorList>
            <consortium name="NIH - Xenopus Gene Collection (XGC) project"/>
        </authorList>
    </citation>
    <scope>NUCLEOTIDE SEQUENCE [LARGE SCALE MRNA]</scope>
    <source>
        <tissue>Embryo</tissue>
    </source>
</reference>
<name>NCBP2_XENTR</name>
<keyword id="KW-0963">Cytoplasm</keyword>
<keyword id="KW-0507">mRNA processing</keyword>
<keyword id="KW-0508">mRNA splicing</keyword>
<keyword id="KW-0509">mRNA transport</keyword>
<keyword id="KW-0866">Nonsense-mediated mRNA decay</keyword>
<keyword id="KW-0539">Nucleus</keyword>
<keyword id="KW-1185">Reference proteome</keyword>
<keyword id="KW-0694">RNA-binding</keyword>
<keyword id="KW-0943">RNA-mediated gene silencing</keyword>
<keyword id="KW-0810">Translation regulation</keyword>
<keyword id="KW-0813">Transport</keyword>